<protein>
    <recommendedName>
        <fullName>Protein chibby homolog 1</fullName>
    </recommendedName>
    <alternativeName>
        <fullName>Cytosolic leucine-rich protein</fullName>
    </alternativeName>
    <alternativeName>
        <fullName>PIGEA-14</fullName>
    </alternativeName>
    <alternativeName>
        <fullName>PKD2 interactor, Golgi and endoplasmic reticulum-associated 1</fullName>
    </alternativeName>
</protein>
<reference key="1">
    <citation type="submission" date="2000-12" db="EMBL/GenBank/DDBJ databases">
        <title>A novel cytosolic leucine-rich protein.</title>
        <authorList>
            <person name="Huang C.-H."/>
        </authorList>
    </citation>
    <scope>NUCLEOTIDE SEQUENCE [MRNA]</scope>
</reference>
<reference key="2">
    <citation type="journal article" date="2005" name="Science">
        <title>The transcriptional landscape of the mammalian genome.</title>
        <authorList>
            <person name="Carninci P."/>
            <person name="Kasukawa T."/>
            <person name="Katayama S."/>
            <person name="Gough J."/>
            <person name="Frith M.C."/>
            <person name="Maeda N."/>
            <person name="Oyama R."/>
            <person name="Ravasi T."/>
            <person name="Lenhard B."/>
            <person name="Wells C."/>
            <person name="Kodzius R."/>
            <person name="Shimokawa K."/>
            <person name="Bajic V.B."/>
            <person name="Brenner S.E."/>
            <person name="Batalov S."/>
            <person name="Forrest A.R."/>
            <person name="Zavolan M."/>
            <person name="Davis M.J."/>
            <person name="Wilming L.G."/>
            <person name="Aidinis V."/>
            <person name="Allen J.E."/>
            <person name="Ambesi-Impiombato A."/>
            <person name="Apweiler R."/>
            <person name="Aturaliya R.N."/>
            <person name="Bailey T.L."/>
            <person name="Bansal M."/>
            <person name="Baxter L."/>
            <person name="Beisel K.W."/>
            <person name="Bersano T."/>
            <person name="Bono H."/>
            <person name="Chalk A.M."/>
            <person name="Chiu K.P."/>
            <person name="Choudhary V."/>
            <person name="Christoffels A."/>
            <person name="Clutterbuck D.R."/>
            <person name="Crowe M.L."/>
            <person name="Dalla E."/>
            <person name="Dalrymple B.P."/>
            <person name="de Bono B."/>
            <person name="Della Gatta G."/>
            <person name="di Bernardo D."/>
            <person name="Down T."/>
            <person name="Engstrom P."/>
            <person name="Fagiolini M."/>
            <person name="Faulkner G."/>
            <person name="Fletcher C.F."/>
            <person name="Fukushima T."/>
            <person name="Furuno M."/>
            <person name="Futaki S."/>
            <person name="Gariboldi M."/>
            <person name="Georgii-Hemming P."/>
            <person name="Gingeras T.R."/>
            <person name="Gojobori T."/>
            <person name="Green R.E."/>
            <person name="Gustincich S."/>
            <person name="Harbers M."/>
            <person name="Hayashi Y."/>
            <person name="Hensch T.K."/>
            <person name="Hirokawa N."/>
            <person name="Hill D."/>
            <person name="Huminiecki L."/>
            <person name="Iacono M."/>
            <person name="Ikeo K."/>
            <person name="Iwama A."/>
            <person name="Ishikawa T."/>
            <person name="Jakt M."/>
            <person name="Kanapin A."/>
            <person name="Katoh M."/>
            <person name="Kawasawa Y."/>
            <person name="Kelso J."/>
            <person name="Kitamura H."/>
            <person name="Kitano H."/>
            <person name="Kollias G."/>
            <person name="Krishnan S.P."/>
            <person name="Kruger A."/>
            <person name="Kummerfeld S.K."/>
            <person name="Kurochkin I.V."/>
            <person name="Lareau L.F."/>
            <person name="Lazarevic D."/>
            <person name="Lipovich L."/>
            <person name="Liu J."/>
            <person name="Liuni S."/>
            <person name="McWilliam S."/>
            <person name="Madan Babu M."/>
            <person name="Madera M."/>
            <person name="Marchionni L."/>
            <person name="Matsuda H."/>
            <person name="Matsuzawa S."/>
            <person name="Miki H."/>
            <person name="Mignone F."/>
            <person name="Miyake S."/>
            <person name="Morris K."/>
            <person name="Mottagui-Tabar S."/>
            <person name="Mulder N."/>
            <person name="Nakano N."/>
            <person name="Nakauchi H."/>
            <person name="Ng P."/>
            <person name="Nilsson R."/>
            <person name="Nishiguchi S."/>
            <person name="Nishikawa S."/>
            <person name="Nori F."/>
            <person name="Ohara O."/>
            <person name="Okazaki Y."/>
            <person name="Orlando V."/>
            <person name="Pang K.C."/>
            <person name="Pavan W.J."/>
            <person name="Pavesi G."/>
            <person name="Pesole G."/>
            <person name="Petrovsky N."/>
            <person name="Piazza S."/>
            <person name="Reed J."/>
            <person name="Reid J.F."/>
            <person name="Ring B.Z."/>
            <person name="Ringwald M."/>
            <person name="Rost B."/>
            <person name="Ruan Y."/>
            <person name="Salzberg S.L."/>
            <person name="Sandelin A."/>
            <person name="Schneider C."/>
            <person name="Schoenbach C."/>
            <person name="Sekiguchi K."/>
            <person name="Semple C.A."/>
            <person name="Seno S."/>
            <person name="Sessa L."/>
            <person name="Sheng Y."/>
            <person name="Shibata Y."/>
            <person name="Shimada H."/>
            <person name="Shimada K."/>
            <person name="Silva D."/>
            <person name="Sinclair B."/>
            <person name="Sperling S."/>
            <person name="Stupka E."/>
            <person name="Sugiura K."/>
            <person name="Sultana R."/>
            <person name="Takenaka Y."/>
            <person name="Taki K."/>
            <person name="Tammoja K."/>
            <person name="Tan S.L."/>
            <person name="Tang S."/>
            <person name="Taylor M.S."/>
            <person name="Tegner J."/>
            <person name="Teichmann S.A."/>
            <person name="Ueda H.R."/>
            <person name="van Nimwegen E."/>
            <person name="Verardo R."/>
            <person name="Wei C.L."/>
            <person name="Yagi K."/>
            <person name="Yamanishi H."/>
            <person name="Zabarovsky E."/>
            <person name="Zhu S."/>
            <person name="Zimmer A."/>
            <person name="Hide W."/>
            <person name="Bult C."/>
            <person name="Grimmond S.M."/>
            <person name="Teasdale R.D."/>
            <person name="Liu E.T."/>
            <person name="Brusic V."/>
            <person name="Quackenbush J."/>
            <person name="Wahlestedt C."/>
            <person name="Mattick J.S."/>
            <person name="Hume D.A."/>
            <person name="Kai C."/>
            <person name="Sasaki D."/>
            <person name="Tomaru Y."/>
            <person name="Fukuda S."/>
            <person name="Kanamori-Katayama M."/>
            <person name="Suzuki M."/>
            <person name="Aoki J."/>
            <person name="Arakawa T."/>
            <person name="Iida J."/>
            <person name="Imamura K."/>
            <person name="Itoh M."/>
            <person name="Kato T."/>
            <person name="Kawaji H."/>
            <person name="Kawagashira N."/>
            <person name="Kawashima T."/>
            <person name="Kojima M."/>
            <person name="Kondo S."/>
            <person name="Konno H."/>
            <person name="Nakano K."/>
            <person name="Ninomiya N."/>
            <person name="Nishio T."/>
            <person name="Okada M."/>
            <person name="Plessy C."/>
            <person name="Shibata K."/>
            <person name="Shiraki T."/>
            <person name="Suzuki S."/>
            <person name="Tagami M."/>
            <person name="Waki K."/>
            <person name="Watahiki A."/>
            <person name="Okamura-Oho Y."/>
            <person name="Suzuki H."/>
            <person name="Kawai J."/>
            <person name="Hayashizaki Y."/>
        </authorList>
    </citation>
    <scope>NUCLEOTIDE SEQUENCE [LARGE SCALE MRNA]</scope>
    <source>
        <strain>C57BL/6J</strain>
        <tissue>Embryo</tissue>
    </source>
</reference>
<reference key="3">
    <citation type="journal article" date="2004" name="Genome Res.">
        <title>The status, quality, and expansion of the NIH full-length cDNA project: the Mammalian Gene Collection (MGC).</title>
        <authorList>
            <consortium name="The MGC Project Team"/>
        </authorList>
    </citation>
    <scope>NUCLEOTIDE SEQUENCE [LARGE SCALE MRNA]</scope>
    <source>
        <strain>FVB/N</strain>
        <tissue>Mammary tumor</tissue>
    </source>
</reference>
<reference key="4">
    <citation type="journal article" date="2007" name="Circulation">
        <title>Chibby, an antagonist of the Wnt/beta-catenin pathway, facilitates cardiomyocyte differentiation of murine embryonic stem cells.</title>
        <authorList>
            <person name="Singh A.M."/>
            <person name="Li F.-Q."/>
            <person name="Hamazaki T."/>
            <person name="Kasahara H."/>
            <person name="Takemaru K."/>
            <person name="Terada N."/>
        </authorList>
    </citation>
    <scope>FUNCTION</scope>
    <scope>TISSUE SPECIFICITY</scope>
    <scope>DEVELOPMENTAL STAGE</scope>
</reference>
<reference key="5">
    <citation type="journal article" date="2007" name="Mol. Cell. Biol.">
        <title>Chibby promotes adipocyte differentiation through inhibition of beta-catenin signaling.</title>
        <authorList>
            <person name="Li F.-Q."/>
            <person name="Singh A.M."/>
            <person name="Mofunanya A."/>
            <person name="Love D."/>
            <person name="Terada N."/>
            <person name="Moon R.T."/>
            <person name="Takemaru K."/>
        </authorList>
    </citation>
    <scope>FUNCTION</scope>
</reference>
<reference key="6">
    <citation type="journal article" date="2010" name="Cell">
        <title>A tissue-specific atlas of mouse protein phosphorylation and expression.</title>
        <authorList>
            <person name="Huttlin E.L."/>
            <person name="Jedrychowski M.P."/>
            <person name="Elias J.E."/>
            <person name="Goswami T."/>
            <person name="Rad R."/>
            <person name="Beausoleil S.A."/>
            <person name="Villen J."/>
            <person name="Haas W."/>
            <person name="Sowa M.E."/>
            <person name="Gygi S.P."/>
        </authorList>
    </citation>
    <scope>IDENTIFICATION BY MASS SPECTROMETRY [LARGE SCALE ANALYSIS]</scope>
    <source>
        <tissue>Lung</tissue>
        <tissue>Testis</tissue>
    </source>
</reference>
<reference key="7">
    <citation type="journal article" date="2024" name="J. Cell Biol.">
        <title>The Cby3/ciBAR1 complex positions the annulus along the sperm flagellum during spermiogenesis.</title>
        <authorList>
            <person name="Hoque M."/>
            <person name="Li F.Q."/>
            <person name="Weber W.D."/>
            <person name="Chen J.J."/>
            <person name="Kim E.N."/>
            <person name="Kuo P.L."/>
            <person name="Visconti P.E."/>
            <person name="Takemaru K.I."/>
        </authorList>
    </citation>
    <scope>SUBCELLULAR LOCATION</scope>
</reference>
<dbReference type="EMBL" id="AF331040">
    <property type="protein sequence ID" value="AAL56061.1"/>
    <property type="molecule type" value="mRNA"/>
</dbReference>
<dbReference type="EMBL" id="AK003719">
    <property type="protein sequence ID" value="BAB22956.1"/>
    <property type="molecule type" value="mRNA"/>
</dbReference>
<dbReference type="EMBL" id="BC005733">
    <property type="protein sequence ID" value="AAH05733.1"/>
    <property type="molecule type" value="mRNA"/>
</dbReference>
<dbReference type="CCDS" id="CCDS27645.1"/>
<dbReference type="RefSeq" id="NP_001405601.1">
    <property type="nucleotide sequence ID" value="NM_001418672.1"/>
</dbReference>
<dbReference type="RefSeq" id="NP_082910.1">
    <property type="nucleotide sequence ID" value="NM_028634.4"/>
</dbReference>
<dbReference type="SMR" id="Q9D1C2"/>
<dbReference type="BioGRID" id="216224">
    <property type="interactions" value="3"/>
</dbReference>
<dbReference type="FunCoup" id="Q9D1C2">
    <property type="interactions" value="824"/>
</dbReference>
<dbReference type="IntAct" id="Q9D1C2">
    <property type="interactions" value="1"/>
</dbReference>
<dbReference type="STRING" id="10090.ENSMUSP00000023064"/>
<dbReference type="iPTMnet" id="Q9D1C2"/>
<dbReference type="PhosphoSitePlus" id="Q9D1C2"/>
<dbReference type="jPOST" id="Q9D1C2"/>
<dbReference type="PaxDb" id="10090-ENSMUSP00000023064"/>
<dbReference type="PeptideAtlas" id="Q9D1C2"/>
<dbReference type="ProteomicsDB" id="279934"/>
<dbReference type="Pumba" id="Q9D1C2"/>
<dbReference type="Antibodypedia" id="26394">
    <property type="antibodies" value="163 antibodies from 28 providers"/>
</dbReference>
<dbReference type="DNASU" id="73739"/>
<dbReference type="Ensembl" id="ENSMUST00000023064.9">
    <property type="protein sequence ID" value="ENSMUSP00000023064.8"/>
    <property type="gene ID" value="ENSMUSG00000022428.9"/>
</dbReference>
<dbReference type="GeneID" id="73739"/>
<dbReference type="KEGG" id="mmu:73739"/>
<dbReference type="UCSC" id="uc007wuc.1">
    <property type="organism name" value="mouse"/>
</dbReference>
<dbReference type="AGR" id="MGI:1920989"/>
<dbReference type="CTD" id="25776"/>
<dbReference type="MGI" id="MGI:1920989">
    <property type="gene designation" value="Cby1"/>
</dbReference>
<dbReference type="VEuPathDB" id="HostDB:ENSMUSG00000022428"/>
<dbReference type="eggNOG" id="ENOG502S6C8">
    <property type="taxonomic scope" value="Eukaryota"/>
</dbReference>
<dbReference type="GeneTree" id="ENSGT00940000153137"/>
<dbReference type="HOGENOM" id="CLU_134504_0_0_1"/>
<dbReference type="InParanoid" id="Q9D1C2"/>
<dbReference type="OMA" id="IWMHSAR"/>
<dbReference type="OrthoDB" id="2145765at2759"/>
<dbReference type="PhylomeDB" id="Q9D1C2"/>
<dbReference type="TreeFam" id="TF324419"/>
<dbReference type="Reactome" id="R-MMU-3769402">
    <property type="pathway name" value="Deactivation of the beta-catenin transactivating complex"/>
</dbReference>
<dbReference type="BioGRID-ORCS" id="73739">
    <property type="hits" value="7 hits in 77 CRISPR screens"/>
</dbReference>
<dbReference type="CD-CODE" id="01CA17F3">
    <property type="entry name" value="Centrosome"/>
</dbReference>
<dbReference type="PRO" id="PR:Q9D1C2"/>
<dbReference type="Proteomes" id="UP000000589">
    <property type="component" value="Chromosome 15"/>
</dbReference>
<dbReference type="RNAct" id="Q9D1C2">
    <property type="molecule type" value="protein"/>
</dbReference>
<dbReference type="Bgee" id="ENSMUSG00000022428">
    <property type="expression patterns" value="Expressed in cortical plate and 248 other cell types or tissues"/>
</dbReference>
<dbReference type="GO" id="GO:0005814">
    <property type="term" value="C:centriole"/>
    <property type="evidence" value="ECO:0000314"/>
    <property type="project" value="MGI"/>
</dbReference>
<dbReference type="GO" id="GO:0005813">
    <property type="term" value="C:centrosome"/>
    <property type="evidence" value="ECO:0007669"/>
    <property type="project" value="Ensembl"/>
</dbReference>
<dbReference type="GO" id="GO:0036064">
    <property type="term" value="C:ciliary basal body"/>
    <property type="evidence" value="ECO:0000314"/>
    <property type="project" value="UniProtKB"/>
</dbReference>
<dbReference type="GO" id="GO:0016607">
    <property type="term" value="C:nuclear speck"/>
    <property type="evidence" value="ECO:0007669"/>
    <property type="project" value="UniProtKB-SubCell"/>
</dbReference>
<dbReference type="GO" id="GO:0005730">
    <property type="term" value="C:nucleolus"/>
    <property type="evidence" value="ECO:0007669"/>
    <property type="project" value="Ensembl"/>
</dbReference>
<dbReference type="GO" id="GO:0036126">
    <property type="term" value="C:sperm flagellum"/>
    <property type="evidence" value="ECO:0000314"/>
    <property type="project" value="UniProtKB"/>
</dbReference>
<dbReference type="GO" id="GO:0005802">
    <property type="term" value="C:trans-Golgi network"/>
    <property type="evidence" value="ECO:0007669"/>
    <property type="project" value="Ensembl"/>
</dbReference>
<dbReference type="GO" id="GO:0008013">
    <property type="term" value="F:beta-catenin binding"/>
    <property type="evidence" value="ECO:0007669"/>
    <property type="project" value="Ensembl"/>
</dbReference>
<dbReference type="GO" id="GO:0042803">
    <property type="term" value="F:protein homodimerization activity"/>
    <property type="evidence" value="ECO:0007669"/>
    <property type="project" value="Ensembl"/>
</dbReference>
<dbReference type="GO" id="GO:0060070">
    <property type="term" value="P:canonical Wnt signaling pathway"/>
    <property type="evidence" value="ECO:0000315"/>
    <property type="project" value="MGI"/>
</dbReference>
<dbReference type="GO" id="GO:0055007">
    <property type="term" value="P:cardiac muscle cell differentiation"/>
    <property type="evidence" value="ECO:0000315"/>
    <property type="project" value="UniProtKB"/>
</dbReference>
<dbReference type="GO" id="GO:0060271">
    <property type="term" value="P:cilium assembly"/>
    <property type="evidence" value="ECO:0000315"/>
    <property type="project" value="MGI"/>
</dbReference>
<dbReference type="GO" id="GO:0045444">
    <property type="term" value="P:fat cell differentiation"/>
    <property type="evidence" value="ECO:0000315"/>
    <property type="project" value="UniProtKB"/>
</dbReference>
<dbReference type="GO" id="GO:0033504">
    <property type="term" value="P:floor plate development"/>
    <property type="evidence" value="ECO:0000316"/>
    <property type="project" value="MGI"/>
</dbReference>
<dbReference type="GO" id="GO:0090090">
    <property type="term" value="P:negative regulation of canonical Wnt signaling pathway"/>
    <property type="evidence" value="ECO:0000315"/>
    <property type="project" value="MGI"/>
</dbReference>
<dbReference type="GO" id="GO:0045892">
    <property type="term" value="P:negative regulation of DNA-templated transcription"/>
    <property type="evidence" value="ECO:0007669"/>
    <property type="project" value="Ensembl"/>
</dbReference>
<dbReference type="GO" id="GO:0051289">
    <property type="term" value="P:protein homotetramerization"/>
    <property type="evidence" value="ECO:0007669"/>
    <property type="project" value="Ensembl"/>
</dbReference>
<dbReference type="GO" id="GO:0008104">
    <property type="term" value="P:protein localization"/>
    <property type="evidence" value="ECO:0007669"/>
    <property type="project" value="Ensembl"/>
</dbReference>
<dbReference type="CDD" id="cd07429">
    <property type="entry name" value="Cby_like"/>
    <property type="match status" value="1"/>
</dbReference>
<dbReference type="InterPro" id="IPR028118">
    <property type="entry name" value="Chibby_fam"/>
</dbReference>
<dbReference type="PANTHER" id="PTHR21533">
    <property type="entry name" value="LEUCINE-RICH PROTEIN"/>
    <property type="match status" value="1"/>
</dbReference>
<dbReference type="PANTHER" id="PTHR21533:SF20">
    <property type="entry name" value="PROTEIN CHIBBY HOMOLOG 1"/>
    <property type="match status" value="1"/>
</dbReference>
<dbReference type="Pfam" id="PF14645">
    <property type="entry name" value="Chibby"/>
    <property type="match status" value="1"/>
</dbReference>
<evidence type="ECO:0000250" key="1">
    <source>
        <dbReference type="UniProtKB" id="Q8K4I6"/>
    </source>
</evidence>
<evidence type="ECO:0000250" key="2">
    <source>
        <dbReference type="UniProtKB" id="Q9Y3M2"/>
    </source>
</evidence>
<evidence type="ECO:0000255" key="3"/>
<evidence type="ECO:0000256" key="4">
    <source>
        <dbReference type="SAM" id="MobiDB-lite"/>
    </source>
</evidence>
<evidence type="ECO:0000269" key="5">
    <source>
    </source>
</evidence>
<evidence type="ECO:0000269" key="6">
    <source>
    </source>
</evidence>
<evidence type="ECO:0000269" key="7">
    <source>
    </source>
</evidence>
<evidence type="ECO:0000305" key="8"/>
<keyword id="KW-0966">Cell projection</keyword>
<keyword id="KW-0969">Cilium</keyword>
<keyword id="KW-0970">Cilium biogenesis/degradation</keyword>
<keyword id="KW-0175">Coiled coil</keyword>
<keyword id="KW-0963">Cytoplasm</keyword>
<keyword id="KW-0206">Cytoskeleton</keyword>
<keyword id="KW-0221">Differentiation</keyword>
<keyword id="KW-0282">Flagellum</keyword>
<keyword id="KW-0333">Golgi apparatus</keyword>
<keyword id="KW-0539">Nucleus</keyword>
<keyword id="KW-0597">Phosphoprotein</keyword>
<keyword id="KW-1185">Reference proteome</keyword>
<organism>
    <name type="scientific">Mus musculus</name>
    <name type="common">Mouse</name>
    <dbReference type="NCBI Taxonomy" id="10090"/>
    <lineage>
        <taxon>Eukaryota</taxon>
        <taxon>Metazoa</taxon>
        <taxon>Chordata</taxon>
        <taxon>Craniata</taxon>
        <taxon>Vertebrata</taxon>
        <taxon>Euteleostomi</taxon>
        <taxon>Mammalia</taxon>
        <taxon>Eutheria</taxon>
        <taxon>Euarchontoglires</taxon>
        <taxon>Glires</taxon>
        <taxon>Rodentia</taxon>
        <taxon>Myomorpha</taxon>
        <taxon>Muroidea</taxon>
        <taxon>Muridae</taxon>
        <taxon>Murinae</taxon>
        <taxon>Mus</taxon>
        <taxon>Mus</taxon>
    </lineage>
</organism>
<comment type="function">
    <text evidence="2 5 6">Inhibits the Wnt/Wingless pathway by binding to CTNNB1/beta-catenin and inhibiting beta-catenin-mediated transcriptional activation through competition with TCF/LEF transcription factors (By similarity). Has also been shown to play a role in regulating the intracellular trafficking of polycystin-2/PKD2 and possibly of other intracellular proteins (By similarity). Promotes adipocyte and cardiomyocyte differentiation (PubMed:17261658, PubMed:17403895).</text>
</comment>
<comment type="subunit">
    <text evidence="2">Homodimer. Homodimerization is essential for nuclear localization and interaction with KPNA4 but is dispensable for interaction with CTNNB1. Interacts with polycystin-2/PKD2 and GM130. Interacts with the C-terminal region of CTNNB1. Interacts (C-terminus) with TCIM (C-terminus), TCIM competes with CTNNB1 for the interaction with CBY1. Interacts with FAM92A; this interaction facilitates targeting of FAM92A to cilium basal body. Interacts with CIBAR2. Interacts with KPNA4.</text>
</comment>
<comment type="subcellular location">
    <subcellularLocation>
        <location evidence="2">Nucleus speckle</location>
    </subcellularLocation>
    <subcellularLocation>
        <location evidence="2">Cytoplasm</location>
        <location evidence="2">Cytoskeleton</location>
        <location evidence="2">Cilium basal body</location>
    </subcellularLocation>
    <subcellularLocation>
        <location evidence="2">Cytoplasm</location>
        <location evidence="2">Cytoskeleton</location>
        <location evidence="2">Microtubule organizing center</location>
        <location evidence="2">Centrosome</location>
        <location evidence="2">Centriole</location>
    </subcellularLocation>
    <subcellularLocation>
        <location evidence="2">Golgi apparatus</location>
    </subcellularLocation>
    <subcellularLocation>
        <location evidence="2">Golgi apparatus</location>
        <location evidence="2">trans-Golgi network</location>
    </subcellularLocation>
    <subcellularLocation>
        <location evidence="7">Cell projection</location>
        <location evidence="7">Cilium</location>
        <location evidence="7">Flagellum</location>
    </subcellularLocation>
    <subcellularLocation>
        <location evidence="2">Nucleus</location>
    </subcellularLocation>
    <subcellularLocation>
        <location evidence="2">Cytoplasm</location>
    </subcellularLocation>
</comment>
<comment type="tissue specificity">
    <text evidence="5">Found in heart, brain, lung, liver, muscle, kidney and testis. Levels are approximately 3-fold higher in embryonic and adult heart than in lung or liver.</text>
</comment>
<comment type="developmental stage">
    <text evidence="5">Ubiquitously expressed in early stages of embryonic stem cell differentiation but decreases at later stages when high expression is restricted to cardiomyocytes.</text>
</comment>
<comment type="miscellaneous">
    <text>'Chibby' is Japanese for 'small'; the gene was so named for the RNAi phenotype seen in flies.</text>
</comment>
<comment type="similarity">
    <text evidence="8">Belongs to the chibby family.</text>
</comment>
<proteinExistence type="evidence at protein level"/>
<sequence>MPLFGSIFSPKKTPPRKSASLSNLHSLDRSTRELELGLDYGTPTMNLAGQSLKFENGQWVADSVISGGVDRRETQRLRKRNQQLEEENNLLRLKVDILLDMLSETTAESHLKDKELDELKVTNRRRK</sequence>
<name>CBY1_MOUSE</name>
<feature type="chain" id="PRO_0000058355" description="Protein chibby homolog 1">
    <location>
        <begin position="1"/>
        <end position="127"/>
    </location>
</feature>
<feature type="region of interest" description="Disordered" evidence="4">
    <location>
        <begin position="1"/>
        <end position="25"/>
    </location>
</feature>
<feature type="region of interest" description="Minimal region for the interaction with PKD2" evidence="2">
    <location>
        <begin position="60"/>
        <end position="112"/>
    </location>
</feature>
<feature type="region of interest" description="Leucine-zipper; mediates homodimerization" evidence="2">
    <location>
        <begin position="77"/>
        <end position="98"/>
    </location>
</feature>
<feature type="coiled-coil region" evidence="3">
    <location>
        <begin position="68"/>
        <end position="110"/>
    </location>
</feature>
<feature type="modified residue" description="Phosphoserine" evidence="1">
    <location>
        <position position="9"/>
    </location>
</feature>
<feature type="modified residue" description="Phosphoserine" evidence="2">
    <location>
        <position position="20"/>
    </location>
</feature>
<gene>
    <name type="primary">Cby1</name>
    <name type="synonym">Cby</name>
    <name type="synonym">Pgea1</name>
</gene>
<accession>Q9D1C2</accession>